<gene>
    <name evidence="1" type="primary">rlmN</name>
    <name type="ordered locus">lpl1479</name>
</gene>
<protein>
    <recommendedName>
        <fullName evidence="1">Dual-specificity RNA methyltransferase RlmN</fullName>
        <ecNumber evidence="1">2.1.1.192</ecNumber>
    </recommendedName>
    <alternativeName>
        <fullName evidence="1">23S rRNA (adenine(2503)-C(2))-methyltransferase</fullName>
    </alternativeName>
    <alternativeName>
        <fullName evidence="1">23S rRNA m2A2503 methyltransferase</fullName>
    </alternativeName>
    <alternativeName>
        <fullName evidence="1">Ribosomal RNA large subunit methyltransferase N</fullName>
    </alternativeName>
    <alternativeName>
        <fullName evidence="1">tRNA (adenine(37)-C(2))-methyltransferase</fullName>
    </alternativeName>
    <alternativeName>
        <fullName evidence="1">tRNA m2A37 methyltransferase</fullName>
    </alternativeName>
</protein>
<evidence type="ECO:0000255" key="1">
    <source>
        <dbReference type="HAMAP-Rule" id="MF_01849"/>
    </source>
</evidence>
<evidence type="ECO:0000255" key="2">
    <source>
        <dbReference type="PROSITE-ProRule" id="PRU01266"/>
    </source>
</evidence>
<proteinExistence type="inferred from homology"/>
<accession>Q5WWH4</accession>
<dbReference type="EC" id="2.1.1.192" evidence="1"/>
<dbReference type="EMBL" id="CR628337">
    <property type="protein sequence ID" value="CAH15719.1"/>
    <property type="molecule type" value="Genomic_DNA"/>
</dbReference>
<dbReference type="RefSeq" id="WP_011215527.1">
    <property type="nucleotide sequence ID" value="NC_006369.1"/>
</dbReference>
<dbReference type="SMR" id="Q5WWH4"/>
<dbReference type="KEGG" id="lpf:lpl1479"/>
<dbReference type="LegioList" id="lpl1479"/>
<dbReference type="HOGENOM" id="CLU_029101_0_0_6"/>
<dbReference type="Proteomes" id="UP000002517">
    <property type="component" value="Chromosome"/>
</dbReference>
<dbReference type="GO" id="GO:0005737">
    <property type="term" value="C:cytoplasm"/>
    <property type="evidence" value="ECO:0007669"/>
    <property type="project" value="UniProtKB-SubCell"/>
</dbReference>
<dbReference type="GO" id="GO:0051539">
    <property type="term" value="F:4 iron, 4 sulfur cluster binding"/>
    <property type="evidence" value="ECO:0007669"/>
    <property type="project" value="UniProtKB-UniRule"/>
</dbReference>
<dbReference type="GO" id="GO:0046872">
    <property type="term" value="F:metal ion binding"/>
    <property type="evidence" value="ECO:0007669"/>
    <property type="project" value="UniProtKB-KW"/>
</dbReference>
<dbReference type="GO" id="GO:0070040">
    <property type="term" value="F:rRNA (adenine(2503)-C2-)-methyltransferase activity"/>
    <property type="evidence" value="ECO:0007669"/>
    <property type="project" value="UniProtKB-UniRule"/>
</dbReference>
<dbReference type="GO" id="GO:0019843">
    <property type="term" value="F:rRNA binding"/>
    <property type="evidence" value="ECO:0007669"/>
    <property type="project" value="UniProtKB-UniRule"/>
</dbReference>
<dbReference type="GO" id="GO:0002935">
    <property type="term" value="F:tRNA (adenine(37)-C2)-methyltransferase activity"/>
    <property type="evidence" value="ECO:0007669"/>
    <property type="project" value="UniProtKB-UniRule"/>
</dbReference>
<dbReference type="GO" id="GO:0000049">
    <property type="term" value="F:tRNA binding"/>
    <property type="evidence" value="ECO:0007669"/>
    <property type="project" value="UniProtKB-UniRule"/>
</dbReference>
<dbReference type="GO" id="GO:0070475">
    <property type="term" value="P:rRNA base methylation"/>
    <property type="evidence" value="ECO:0007669"/>
    <property type="project" value="UniProtKB-UniRule"/>
</dbReference>
<dbReference type="GO" id="GO:0030488">
    <property type="term" value="P:tRNA methylation"/>
    <property type="evidence" value="ECO:0007669"/>
    <property type="project" value="UniProtKB-UniRule"/>
</dbReference>
<dbReference type="CDD" id="cd01335">
    <property type="entry name" value="Radical_SAM"/>
    <property type="match status" value="1"/>
</dbReference>
<dbReference type="FunFam" id="1.10.150.530:FF:000003">
    <property type="entry name" value="Dual-specificity RNA methyltransferase RlmN"/>
    <property type="match status" value="1"/>
</dbReference>
<dbReference type="FunFam" id="3.20.20.70:FF:000008">
    <property type="entry name" value="Dual-specificity RNA methyltransferase RlmN"/>
    <property type="match status" value="1"/>
</dbReference>
<dbReference type="Gene3D" id="1.10.150.530">
    <property type="match status" value="1"/>
</dbReference>
<dbReference type="Gene3D" id="3.20.20.70">
    <property type="entry name" value="Aldolase class I"/>
    <property type="match status" value="1"/>
</dbReference>
<dbReference type="HAMAP" id="MF_01849">
    <property type="entry name" value="RNA_methyltr_RlmN"/>
    <property type="match status" value="1"/>
</dbReference>
<dbReference type="InterPro" id="IPR013785">
    <property type="entry name" value="Aldolase_TIM"/>
</dbReference>
<dbReference type="InterPro" id="IPR040072">
    <property type="entry name" value="Methyltransferase_A"/>
</dbReference>
<dbReference type="InterPro" id="IPR048641">
    <property type="entry name" value="RlmN_N"/>
</dbReference>
<dbReference type="InterPro" id="IPR027492">
    <property type="entry name" value="RNA_MTrfase_RlmN"/>
</dbReference>
<dbReference type="InterPro" id="IPR004383">
    <property type="entry name" value="rRNA_lsu_MTrfase_RlmN/Cfr"/>
</dbReference>
<dbReference type="InterPro" id="IPR007197">
    <property type="entry name" value="rSAM"/>
</dbReference>
<dbReference type="NCBIfam" id="TIGR00048">
    <property type="entry name" value="rRNA_mod_RlmN"/>
    <property type="match status" value="1"/>
</dbReference>
<dbReference type="PANTHER" id="PTHR30544">
    <property type="entry name" value="23S RRNA METHYLTRANSFERASE"/>
    <property type="match status" value="1"/>
</dbReference>
<dbReference type="PANTHER" id="PTHR30544:SF5">
    <property type="entry name" value="RADICAL SAM CORE DOMAIN-CONTAINING PROTEIN"/>
    <property type="match status" value="1"/>
</dbReference>
<dbReference type="Pfam" id="PF04055">
    <property type="entry name" value="Radical_SAM"/>
    <property type="match status" value="1"/>
</dbReference>
<dbReference type="Pfam" id="PF21016">
    <property type="entry name" value="RlmN_N"/>
    <property type="match status" value="1"/>
</dbReference>
<dbReference type="PIRSF" id="PIRSF006004">
    <property type="entry name" value="CHP00048"/>
    <property type="match status" value="1"/>
</dbReference>
<dbReference type="SFLD" id="SFLDF00275">
    <property type="entry name" value="adenosine_C2_methyltransferase"/>
    <property type="match status" value="1"/>
</dbReference>
<dbReference type="SFLD" id="SFLDG01062">
    <property type="entry name" value="methyltransferase_(Class_A)"/>
    <property type="match status" value="1"/>
</dbReference>
<dbReference type="SUPFAM" id="SSF102114">
    <property type="entry name" value="Radical SAM enzymes"/>
    <property type="match status" value="1"/>
</dbReference>
<dbReference type="PROSITE" id="PS51918">
    <property type="entry name" value="RADICAL_SAM"/>
    <property type="match status" value="1"/>
</dbReference>
<comment type="function">
    <text evidence="1">Specifically methylates position 2 of adenine 2503 in 23S rRNA and position 2 of adenine 37 in tRNAs. m2A2503 modification seems to play a crucial role in the proofreading step occurring at the peptidyl transferase center and thus would serve to optimize ribosomal fidelity.</text>
</comment>
<comment type="catalytic activity">
    <reaction evidence="1">
        <text>adenosine(2503) in 23S rRNA + 2 reduced [2Fe-2S]-[ferredoxin] + 2 S-adenosyl-L-methionine = 2-methyladenosine(2503) in 23S rRNA + 5'-deoxyadenosine + L-methionine + 2 oxidized [2Fe-2S]-[ferredoxin] + S-adenosyl-L-homocysteine</text>
        <dbReference type="Rhea" id="RHEA:42916"/>
        <dbReference type="Rhea" id="RHEA-COMP:10000"/>
        <dbReference type="Rhea" id="RHEA-COMP:10001"/>
        <dbReference type="Rhea" id="RHEA-COMP:10152"/>
        <dbReference type="Rhea" id="RHEA-COMP:10282"/>
        <dbReference type="ChEBI" id="CHEBI:17319"/>
        <dbReference type="ChEBI" id="CHEBI:33737"/>
        <dbReference type="ChEBI" id="CHEBI:33738"/>
        <dbReference type="ChEBI" id="CHEBI:57844"/>
        <dbReference type="ChEBI" id="CHEBI:57856"/>
        <dbReference type="ChEBI" id="CHEBI:59789"/>
        <dbReference type="ChEBI" id="CHEBI:74411"/>
        <dbReference type="ChEBI" id="CHEBI:74497"/>
        <dbReference type="EC" id="2.1.1.192"/>
    </reaction>
</comment>
<comment type="catalytic activity">
    <reaction evidence="1">
        <text>adenosine(37) in tRNA + 2 reduced [2Fe-2S]-[ferredoxin] + 2 S-adenosyl-L-methionine = 2-methyladenosine(37) in tRNA + 5'-deoxyadenosine + L-methionine + 2 oxidized [2Fe-2S]-[ferredoxin] + S-adenosyl-L-homocysteine</text>
        <dbReference type="Rhea" id="RHEA:43332"/>
        <dbReference type="Rhea" id="RHEA-COMP:10000"/>
        <dbReference type="Rhea" id="RHEA-COMP:10001"/>
        <dbReference type="Rhea" id="RHEA-COMP:10162"/>
        <dbReference type="Rhea" id="RHEA-COMP:10485"/>
        <dbReference type="ChEBI" id="CHEBI:17319"/>
        <dbReference type="ChEBI" id="CHEBI:33737"/>
        <dbReference type="ChEBI" id="CHEBI:33738"/>
        <dbReference type="ChEBI" id="CHEBI:57844"/>
        <dbReference type="ChEBI" id="CHEBI:57856"/>
        <dbReference type="ChEBI" id="CHEBI:59789"/>
        <dbReference type="ChEBI" id="CHEBI:74411"/>
        <dbReference type="ChEBI" id="CHEBI:74497"/>
        <dbReference type="EC" id="2.1.1.192"/>
    </reaction>
</comment>
<comment type="cofactor">
    <cofactor evidence="1">
        <name>[4Fe-4S] cluster</name>
        <dbReference type="ChEBI" id="CHEBI:49883"/>
    </cofactor>
    <text evidence="1">Binds 1 [4Fe-4S] cluster. The cluster is coordinated with 3 cysteines and an exchangeable S-adenosyl-L-methionine.</text>
</comment>
<comment type="subcellular location">
    <subcellularLocation>
        <location evidence="1">Cytoplasm</location>
    </subcellularLocation>
</comment>
<comment type="miscellaneous">
    <text evidence="1">Reaction proceeds by a ping-pong mechanism involving intermediate methylation of a conserved cysteine residue.</text>
</comment>
<comment type="similarity">
    <text evidence="1">Belongs to the radical SAM superfamily. RlmN family.</text>
</comment>
<name>RLMN_LEGPL</name>
<sequence length="382" mass="43305">MDQQKVNLLNYNYLQLRELLMAWDEKPFRAQQLFQWIHQVGIRDFAQMTNLGKVLRNKLSQLACIDLPEIVACQKSADGTHKWLLKLECGNCIETVFIPEANRGTLCVSSQVGCALNCSFCSTAKQGFNRNLSTAEIIGQVWLAARELSDNDGTHDKKITNVVMMGMGEPLLNFDNVVSAMNIMMDDLAYGLSKRRVTLSTSGVIPEMERLREVSPVALAVSLHAPTDELRNELVPINKKYPLSQLISLCKRYFKDEPRRKVTFEYVMLKGVNDQPEHASQLIKLLHNVPAKVNLIPFNPFPLTQYQRSSRETIDAFRDKLMKHGINTITRKTRGDDIDAACGQLAGEVKDKTSRSQRWQKLHFMSKTDKSTELTISSEEIA</sequence>
<feature type="chain" id="PRO_0000350227" description="Dual-specificity RNA methyltransferase RlmN">
    <location>
        <begin position="1"/>
        <end position="382"/>
    </location>
</feature>
<feature type="domain" description="Radical SAM core" evidence="2">
    <location>
        <begin position="100"/>
        <end position="336"/>
    </location>
</feature>
<feature type="active site" description="Proton acceptor" evidence="1">
    <location>
        <position position="94"/>
    </location>
</feature>
<feature type="active site" description="S-methylcysteine intermediate" evidence="1">
    <location>
        <position position="342"/>
    </location>
</feature>
<feature type="binding site" evidence="1">
    <location>
        <position position="114"/>
    </location>
    <ligand>
        <name>[4Fe-4S] cluster</name>
        <dbReference type="ChEBI" id="CHEBI:49883"/>
        <note>4Fe-4S-S-AdoMet</note>
    </ligand>
</feature>
<feature type="binding site" evidence="1">
    <location>
        <position position="118"/>
    </location>
    <ligand>
        <name>[4Fe-4S] cluster</name>
        <dbReference type="ChEBI" id="CHEBI:49883"/>
        <note>4Fe-4S-S-AdoMet</note>
    </ligand>
</feature>
<feature type="binding site" evidence="1">
    <location>
        <position position="121"/>
    </location>
    <ligand>
        <name>[4Fe-4S] cluster</name>
        <dbReference type="ChEBI" id="CHEBI:49883"/>
        <note>4Fe-4S-S-AdoMet</note>
    </ligand>
</feature>
<feature type="binding site" evidence="1">
    <location>
        <begin position="168"/>
        <end position="169"/>
    </location>
    <ligand>
        <name>S-adenosyl-L-methionine</name>
        <dbReference type="ChEBI" id="CHEBI:59789"/>
    </ligand>
</feature>
<feature type="binding site" evidence="1">
    <location>
        <position position="200"/>
    </location>
    <ligand>
        <name>S-adenosyl-L-methionine</name>
        <dbReference type="ChEBI" id="CHEBI:59789"/>
    </ligand>
</feature>
<feature type="binding site" evidence="1">
    <location>
        <begin position="222"/>
        <end position="224"/>
    </location>
    <ligand>
        <name>S-adenosyl-L-methionine</name>
        <dbReference type="ChEBI" id="CHEBI:59789"/>
    </ligand>
</feature>
<feature type="binding site" evidence="1">
    <location>
        <position position="299"/>
    </location>
    <ligand>
        <name>S-adenosyl-L-methionine</name>
        <dbReference type="ChEBI" id="CHEBI:59789"/>
    </ligand>
</feature>
<feature type="disulfide bond" description="(transient)" evidence="1">
    <location>
        <begin position="107"/>
        <end position="342"/>
    </location>
</feature>
<organism>
    <name type="scientific">Legionella pneumophila (strain Lens)</name>
    <dbReference type="NCBI Taxonomy" id="297245"/>
    <lineage>
        <taxon>Bacteria</taxon>
        <taxon>Pseudomonadati</taxon>
        <taxon>Pseudomonadota</taxon>
        <taxon>Gammaproteobacteria</taxon>
        <taxon>Legionellales</taxon>
        <taxon>Legionellaceae</taxon>
        <taxon>Legionella</taxon>
    </lineage>
</organism>
<keyword id="KW-0004">4Fe-4S</keyword>
<keyword id="KW-0963">Cytoplasm</keyword>
<keyword id="KW-1015">Disulfide bond</keyword>
<keyword id="KW-0408">Iron</keyword>
<keyword id="KW-0411">Iron-sulfur</keyword>
<keyword id="KW-0479">Metal-binding</keyword>
<keyword id="KW-0489">Methyltransferase</keyword>
<keyword id="KW-0698">rRNA processing</keyword>
<keyword id="KW-0949">S-adenosyl-L-methionine</keyword>
<keyword id="KW-0808">Transferase</keyword>
<keyword id="KW-0819">tRNA processing</keyword>
<reference key="1">
    <citation type="journal article" date="2004" name="Nat. Genet.">
        <title>Evidence in the Legionella pneumophila genome for exploitation of host cell functions and high genome plasticity.</title>
        <authorList>
            <person name="Cazalet C."/>
            <person name="Rusniok C."/>
            <person name="Brueggemann H."/>
            <person name="Zidane N."/>
            <person name="Magnier A."/>
            <person name="Ma L."/>
            <person name="Tichit M."/>
            <person name="Jarraud S."/>
            <person name="Bouchier C."/>
            <person name="Vandenesch F."/>
            <person name="Kunst F."/>
            <person name="Etienne J."/>
            <person name="Glaser P."/>
            <person name="Buchrieser C."/>
        </authorList>
    </citation>
    <scope>NUCLEOTIDE SEQUENCE [LARGE SCALE GENOMIC DNA]</scope>
    <source>
        <strain>Lens</strain>
    </source>
</reference>